<comment type="function">
    <text evidence="1">Repressor involved in the biosynthesis of the osmoprotectant glycine betaine. It represses transcription of the choline transporter BetT and the genes of BetAB involved in the synthesis of glycine betaine (By similarity).</text>
</comment>
<comment type="pathway">
    <text>Amine and polyamine biosynthesis; betaine biosynthesis via choline pathway [regulation].</text>
</comment>
<accession>Q4K4K9</accession>
<reference key="1">
    <citation type="journal article" date="2005" name="Nat. Biotechnol.">
        <title>Complete genome sequence of the plant commensal Pseudomonas fluorescens Pf-5.</title>
        <authorList>
            <person name="Paulsen I.T."/>
            <person name="Press C.M."/>
            <person name="Ravel J."/>
            <person name="Kobayashi D.Y."/>
            <person name="Myers G.S.A."/>
            <person name="Mavrodi D.V."/>
            <person name="DeBoy R.T."/>
            <person name="Seshadri R."/>
            <person name="Ren Q."/>
            <person name="Madupu R."/>
            <person name="Dodson R.J."/>
            <person name="Durkin A.S."/>
            <person name="Brinkac L.M."/>
            <person name="Daugherty S.C."/>
            <person name="Sullivan S.A."/>
            <person name="Rosovitz M.J."/>
            <person name="Gwinn M.L."/>
            <person name="Zhou L."/>
            <person name="Schneider D.J."/>
            <person name="Cartinhour S.W."/>
            <person name="Nelson W.C."/>
            <person name="Weidman J."/>
            <person name="Watkins K."/>
            <person name="Tran K."/>
            <person name="Khouri H."/>
            <person name="Pierson E.A."/>
            <person name="Pierson L.S. III"/>
            <person name="Thomashow L.S."/>
            <person name="Loper J.E."/>
        </authorList>
    </citation>
    <scope>NUCLEOTIDE SEQUENCE [LARGE SCALE GENOMIC DNA]</scope>
    <source>
        <strain>ATCC BAA-477 / NRRL B-23932 / Pf-5</strain>
    </source>
</reference>
<dbReference type="EMBL" id="CP000076">
    <property type="protein sequence ID" value="AAY94956.1"/>
    <property type="molecule type" value="Genomic_DNA"/>
</dbReference>
<dbReference type="RefSeq" id="WP_011063941.1">
    <property type="nucleotide sequence ID" value="NC_004129.6"/>
</dbReference>
<dbReference type="SMR" id="Q4K4K9"/>
<dbReference type="STRING" id="220664.PFL_5766"/>
<dbReference type="GeneID" id="57478720"/>
<dbReference type="KEGG" id="pfl:PFL_5766"/>
<dbReference type="eggNOG" id="COG1309">
    <property type="taxonomic scope" value="Bacteria"/>
</dbReference>
<dbReference type="HOGENOM" id="CLU_069356_15_4_6"/>
<dbReference type="UniPathway" id="UPA00529"/>
<dbReference type="Proteomes" id="UP000008540">
    <property type="component" value="Chromosome"/>
</dbReference>
<dbReference type="GO" id="GO:0003700">
    <property type="term" value="F:DNA-binding transcription factor activity"/>
    <property type="evidence" value="ECO:0007669"/>
    <property type="project" value="UniProtKB-UniRule"/>
</dbReference>
<dbReference type="GO" id="GO:0000976">
    <property type="term" value="F:transcription cis-regulatory region binding"/>
    <property type="evidence" value="ECO:0007669"/>
    <property type="project" value="TreeGrafter"/>
</dbReference>
<dbReference type="GO" id="GO:0019285">
    <property type="term" value="P:glycine betaine biosynthetic process from choline"/>
    <property type="evidence" value="ECO:0007669"/>
    <property type="project" value="UniProtKB-UniRule"/>
</dbReference>
<dbReference type="GO" id="GO:0045892">
    <property type="term" value="P:negative regulation of DNA-templated transcription"/>
    <property type="evidence" value="ECO:0007669"/>
    <property type="project" value="UniProtKB-UniRule"/>
</dbReference>
<dbReference type="Gene3D" id="1.10.357.10">
    <property type="entry name" value="Tetracycline Repressor, domain 2"/>
    <property type="match status" value="1"/>
</dbReference>
<dbReference type="HAMAP" id="MF_00768">
    <property type="entry name" value="HTH_type_BetI"/>
    <property type="match status" value="1"/>
</dbReference>
<dbReference type="InterPro" id="IPR039538">
    <property type="entry name" value="BetI_C"/>
</dbReference>
<dbReference type="InterPro" id="IPR023772">
    <property type="entry name" value="DNA-bd_HTH_TetR-type_CS"/>
</dbReference>
<dbReference type="InterPro" id="IPR009057">
    <property type="entry name" value="Homeodomain-like_sf"/>
</dbReference>
<dbReference type="InterPro" id="IPR050109">
    <property type="entry name" value="HTH-type_TetR-like_transc_reg"/>
</dbReference>
<dbReference type="InterPro" id="IPR001647">
    <property type="entry name" value="HTH_TetR"/>
</dbReference>
<dbReference type="InterPro" id="IPR036271">
    <property type="entry name" value="Tet_transcr_reg_TetR-rel_C_sf"/>
</dbReference>
<dbReference type="InterPro" id="IPR017757">
    <property type="entry name" value="Tscrpt_rep_BetI"/>
</dbReference>
<dbReference type="NCBIfam" id="TIGR03384">
    <property type="entry name" value="betaine_BetI"/>
    <property type="match status" value="1"/>
</dbReference>
<dbReference type="NCBIfam" id="NF001978">
    <property type="entry name" value="PRK00767.1"/>
    <property type="match status" value="1"/>
</dbReference>
<dbReference type="PANTHER" id="PTHR30055:SF234">
    <property type="entry name" value="HTH-TYPE TRANSCRIPTIONAL REGULATOR BETI"/>
    <property type="match status" value="1"/>
</dbReference>
<dbReference type="PANTHER" id="PTHR30055">
    <property type="entry name" value="HTH-TYPE TRANSCRIPTIONAL REGULATOR RUTR"/>
    <property type="match status" value="1"/>
</dbReference>
<dbReference type="Pfam" id="PF13977">
    <property type="entry name" value="TetR_C_6"/>
    <property type="match status" value="1"/>
</dbReference>
<dbReference type="Pfam" id="PF00440">
    <property type="entry name" value="TetR_N"/>
    <property type="match status" value="1"/>
</dbReference>
<dbReference type="SUPFAM" id="SSF46689">
    <property type="entry name" value="Homeodomain-like"/>
    <property type="match status" value="1"/>
</dbReference>
<dbReference type="SUPFAM" id="SSF48498">
    <property type="entry name" value="Tetracyclin repressor-like, C-terminal domain"/>
    <property type="match status" value="1"/>
</dbReference>
<dbReference type="PROSITE" id="PS01081">
    <property type="entry name" value="HTH_TETR_1"/>
    <property type="match status" value="1"/>
</dbReference>
<dbReference type="PROSITE" id="PS50977">
    <property type="entry name" value="HTH_TETR_2"/>
    <property type="match status" value="1"/>
</dbReference>
<feature type="chain" id="PRO_0000257738" description="HTH-type transcriptional regulator BetI">
    <location>
        <begin position="1"/>
        <end position="197"/>
    </location>
</feature>
<feature type="domain" description="HTH tetR-type" evidence="2">
    <location>
        <begin position="8"/>
        <end position="68"/>
    </location>
</feature>
<feature type="DNA-binding region" description="H-T-H motif" evidence="2">
    <location>
        <begin position="31"/>
        <end position="50"/>
    </location>
</feature>
<gene>
    <name evidence="2" type="primary">betI</name>
    <name type="ordered locus">PFL_5766</name>
</gene>
<sequence>MPKVGMQPIRRQQLIEATLQAVDQVGMGDASIALIARLAGVSNGIISHYFRDKNGLIAATMGYIMSMLNEGVRARRQALTDDSPRAHLKVIIEGNFDASQVNGPAMKTWLAFWASSMHQPDLHRLQRINDHRLYSNLCCQFRRALPLYHARKAARGLAALIDGLWLRGALSGDAFDTDQAIRIAYEYMDLQLAKQER</sequence>
<proteinExistence type="inferred from homology"/>
<name>BETI_PSEF5</name>
<keyword id="KW-0238">DNA-binding</keyword>
<keyword id="KW-0678">Repressor</keyword>
<keyword id="KW-0804">Transcription</keyword>
<keyword id="KW-0805">Transcription regulation</keyword>
<evidence type="ECO:0000250" key="1"/>
<evidence type="ECO:0000255" key="2">
    <source>
        <dbReference type="HAMAP-Rule" id="MF_00768"/>
    </source>
</evidence>
<protein>
    <recommendedName>
        <fullName evidence="2">HTH-type transcriptional regulator BetI</fullName>
    </recommendedName>
</protein>
<organism>
    <name type="scientific">Pseudomonas fluorescens (strain ATCC BAA-477 / NRRL B-23932 / Pf-5)</name>
    <dbReference type="NCBI Taxonomy" id="220664"/>
    <lineage>
        <taxon>Bacteria</taxon>
        <taxon>Pseudomonadati</taxon>
        <taxon>Pseudomonadota</taxon>
        <taxon>Gammaproteobacteria</taxon>
        <taxon>Pseudomonadales</taxon>
        <taxon>Pseudomonadaceae</taxon>
        <taxon>Pseudomonas</taxon>
    </lineage>
</organism>